<protein>
    <recommendedName>
        <fullName evidence="1">tRNA (guanine-N(1)-)-methyltransferase</fullName>
        <ecNumber evidence="1">2.1.1.228</ecNumber>
    </recommendedName>
    <alternativeName>
        <fullName evidence="1">M1G-methyltransferase</fullName>
    </alternativeName>
    <alternativeName>
        <fullName evidence="1">tRNA [GM37] methyltransferase</fullName>
    </alternativeName>
</protein>
<feature type="chain" id="PRO_1000082505" description="tRNA (guanine-N(1)-)-methyltransferase">
    <location>
        <begin position="1"/>
        <end position="243"/>
    </location>
</feature>
<feature type="binding site" evidence="1">
    <location>
        <position position="111"/>
    </location>
    <ligand>
        <name>S-adenosyl-L-methionine</name>
        <dbReference type="ChEBI" id="CHEBI:59789"/>
    </ligand>
</feature>
<feature type="binding site" evidence="1">
    <location>
        <begin position="130"/>
        <end position="135"/>
    </location>
    <ligand>
        <name>S-adenosyl-L-methionine</name>
        <dbReference type="ChEBI" id="CHEBI:59789"/>
    </ligand>
</feature>
<gene>
    <name evidence="1" type="primary">trmD</name>
    <name type="ordered locus">ACL_1188</name>
</gene>
<name>TRMD_ACHLI</name>
<keyword id="KW-0963">Cytoplasm</keyword>
<keyword id="KW-0489">Methyltransferase</keyword>
<keyword id="KW-1185">Reference proteome</keyword>
<keyword id="KW-0949">S-adenosyl-L-methionine</keyword>
<keyword id="KW-0808">Transferase</keyword>
<keyword id="KW-0819">tRNA processing</keyword>
<dbReference type="EC" id="2.1.1.228" evidence="1"/>
<dbReference type="EMBL" id="CP000896">
    <property type="protein sequence ID" value="ABX81787.1"/>
    <property type="molecule type" value="Genomic_DNA"/>
</dbReference>
<dbReference type="RefSeq" id="WP_012243118.1">
    <property type="nucleotide sequence ID" value="NC_010163.1"/>
</dbReference>
<dbReference type="SMR" id="A9NHF7"/>
<dbReference type="STRING" id="441768.ACL_1188"/>
<dbReference type="GeneID" id="41339327"/>
<dbReference type="KEGG" id="acl:ACL_1188"/>
<dbReference type="eggNOG" id="COG0336">
    <property type="taxonomic scope" value="Bacteria"/>
</dbReference>
<dbReference type="HOGENOM" id="CLU_047363_0_1_14"/>
<dbReference type="OrthoDB" id="9807416at2"/>
<dbReference type="Proteomes" id="UP000008558">
    <property type="component" value="Chromosome"/>
</dbReference>
<dbReference type="GO" id="GO:0005829">
    <property type="term" value="C:cytosol"/>
    <property type="evidence" value="ECO:0007669"/>
    <property type="project" value="TreeGrafter"/>
</dbReference>
<dbReference type="GO" id="GO:0052906">
    <property type="term" value="F:tRNA (guanine(37)-N1)-methyltransferase activity"/>
    <property type="evidence" value="ECO:0007669"/>
    <property type="project" value="UniProtKB-UniRule"/>
</dbReference>
<dbReference type="GO" id="GO:0002939">
    <property type="term" value="P:tRNA N1-guanine methylation"/>
    <property type="evidence" value="ECO:0007669"/>
    <property type="project" value="TreeGrafter"/>
</dbReference>
<dbReference type="CDD" id="cd18080">
    <property type="entry name" value="TrmD-like"/>
    <property type="match status" value="1"/>
</dbReference>
<dbReference type="FunFam" id="1.10.1270.20:FF:000001">
    <property type="entry name" value="tRNA (guanine-N(1)-)-methyltransferase"/>
    <property type="match status" value="1"/>
</dbReference>
<dbReference type="FunFam" id="3.40.1280.10:FF:000001">
    <property type="entry name" value="tRNA (guanine-N(1)-)-methyltransferase"/>
    <property type="match status" value="1"/>
</dbReference>
<dbReference type="Gene3D" id="3.40.1280.10">
    <property type="match status" value="1"/>
</dbReference>
<dbReference type="Gene3D" id="1.10.1270.20">
    <property type="entry name" value="tRNA(m1g37)methyltransferase, domain 2"/>
    <property type="match status" value="1"/>
</dbReference>
<dbReference type="HAMAP" id="MF_00605">
    <property type="entry name" value="TrmD"/>
    <property type="match status" value="1"/>
</dbReference>
<dbReference type="InterPro" id="IPR029028">
    <property type="entry name" value="Alpha/beta_knot_MTases"/>
</dbReference>
<dbReference type="InterPro" id="IPR023148">
    <property type="entry name" value="tRNA_m1G_MeTrfase_C_sf"/>
</dbReference>
<dbReference type="InterPro" id="IPR002649">
    <property type="entry name" value="tRNA_m1G_MeTrfase_TrmD"/>
</dbReference>
<dbReference type="InterPro" id="IPR029026">
    <property type="entry name" value="tRNA_m1G_MTases_N"/>
</dbReference>
<dbReference type="InterPro" id="IPR016009">
    <property type="entry name" value="tRNA_MeTrfase_TRMD/TRM10"/>
</dbReference>
<dbReference type="NCBIfam" id="NF000648">
    <property type="entry name" value="PRK00026.1"/>
    <property type="match status" value="1"/>
</dbReference>
<dbReference type="NCBIfam" id="TIGR00088">
    <property type="entry name" value="trmD"/>
    <property type="match status" value="1"/>
</dbReference>
<dbReference type="PANTHER" id="PTHR46417">
    <property type="entry name" value="TRNA (GUANINE-N(1)-)-METHYLTRANSFERASE"/>
    <property type="match status" value="1"/>
</dbReference>
<dbReference type="PANTHER" id="PTHR46417:SF1">
    <property type="entry name" value="TRNA (GUANINE-N(1)-)-METHYLTRANSFERASE"/>
    <property type="match status" value="1"/>
</dbReference>
<dbReference type="Pfam" id="PF01746">
    <property type="entry name" value="tRNA_m1G_MT"/>
    <property type="match status" value="1"/>
</dbReference>
<dbReference type="PIRSF" id="PIRSF000386">
    <property type="entry name" value="tRNA_mtase"/>
    <property type="match status" value="1"/>
</dbReference>
<dbReference type="SUPFAM" id="SSF75217">
    <property type="entry name" value="alpha/beta knot"/>
    <property type="match status" value="1"/>
</dbReference>
<accession>A9NHF7</accession>
<reference key="1">
    <citation type="journal article" date="2011" name="J. Bacteriol.">
        <title>Complete genome and proteome of Acholeplasma laidlawii.</title>
        <authorList>
            <person name="Lazarev V.N."/>
            <person name="Levitskii S.A."/>
            <person name="Basovskii Y.I."/>
            <person name="Chukin M.M."/>
            <person name="Akopian T.A."/>
            <person name="Vereshchagin V.V."/>
            <person name="Kostrjukova E.S."/>
            <person name="Kovaleva G.Y."/>
            <person name="Kazanov M.D."/>
            <person name="Malko D.B."/>
            <person name="Vitreschak A.G."/>
            <person name="Sernova N.V."/>
            <person name="Gelfand M.S."/>
            <person name="Demina I.A."/>
            <person name="Serebryakova M.V."/>
            <person name="Galyamina M.A."/>
            <person name="Vtyurin N.N."/>
            <person name="Rogov S.I."/>
            <person name="Alexeev D.G."/>
            <person name="Ladygina V.G."/>
            <person name="Govorun V.M."/>
        </authorList>
    </citation>
    <scope>NUCLEOTIDE SEQUENCE [LARGE SCALE GENOMIC DNA]</scope>
    <source>
        <strain>PG-8A</strain>
    </source>
</reference>
<sequence length="243" mass="27983">MIIDIITIFPNFFDQFLTTSKIKHAIEDKRVEINIHDLRLYTDLKGGKIDDTPYGGGAGMLMIYPPFHKLINKLKTKDTYTVLLSPQGNVFNQQVATKWRDEIKHLILICGHYEGIDDRIQNLIDEEISIGDYVLTGGEIPAMVITDSITRLIPGVINEASYMEDTHQQGLLKYPQYTKPDEYLGMSVPDILKSGHHEKIRLWRLEKSLEKTYLKRPDLLVNRDLTKEESKILSKIKKNLESQ</sequence>
<organism>
    <name type="scientific">Acholeplasma laidlawii (strain PG-8A)</name>
    <dbReference type="NCBI Taxonomy" id="441768"/>
    <lineage>
        <taxon>Bacteria</taxon>
        <taxon>Bacillati</taxon>
        <taxon>Mycoplasmatota</taxon>
        <taxon>Mollicutes</taxon>
        <taxon>Acholeplasmatales</taxon>
        <taxon>Acholeplasmataceae</taxon>
        <taxon>Acholeplasma</taxon>
    </lineage>
</organism>
<comment type="function">
    <text evidence="1">Specifically methylates guanosine-37 in various tRNAs.</text>
</comment>
<comment type="catalytic activity">
    <reaction evidence="1">
        <text>guanosine(37) in tRNA + S-adenosyl-L-methionine = N(1)-methylguanosine(37) in tRNA + S-adenosyl-L-homocysteine + H(+)</text>
        <dbReference type="Rhea" id="RHEA:36899"/>
        <dbReference type="Rhea" id="RHEA-COMP:10145"/>
        <dbReference type="Rhea" id="RHEA-COMP:10147"/>
        <dbReference type="ChEBI" id="CHEBI:15378"/>
        <dbReference type="ChEBI" id="CHEBI:57856"/>
        <dbReference type="ChEBI" id="CHEBI:59789"/>
        <dbReference type="ChEBI" id="CHEBI:73542"/>
        <dbReference type="ChEBI" id="CHEBI:74269"/>
        <dbReference type="EC" id="2.1.1.228"/>
    </reaction>
</comment>
<comment type="subunit">
    <text evidence="1">Homodimer.</text>
</comment>
<comment type="subcellular location">
    <subcellularLocation>
        <location evidence="1">Cytoplasm</location>
    </subcellularLocation>
</comment>
<comment type="similarity">
    <text evidence="1">Belongs to the RNA methyltransferase TrmD family.</text>
</comment>
<evidence type="ECO:0000255" key="1">
    <source>
        <dbReference type="HAMAP-Rule" id="MF_00605"/>
    </source>
</evidence>
<proteinExistence type="inferred from homology"/>